<proteinExistence type="inferred from homology"/>
<gene>
    <name type="primary">OPG129</name>
    <name type="ORF">A3L</name>
</gene>
<reference key="1">
    <citation type="journal article" date="1993" name="FEBS Lett.">
        <title>Genes of variola and vaccinia viruses necessary to overcome the host protective mechanisms.</title>
        <authorList>
            <person name="Shchelkunov S.N."/>
            <person name="Blinov V.M."/>
            <person name="Sandakhchiev L.S."/>
        </authorList>
    </citation>
    <scope>NUCLEOTIDE SEQUENCE [LARGE SCALE GENOMIC DNA]</scope>
</reference>
<evidence type="ECO:0000250" key="1"/>
<evidence type="ECO:0000250" key="2">
    <source>
        <dbReference type="UniProtKB" id="P06440"/>
    </source>
</evidence>
<evidence type="ECO:0000256" key="3">
    <source>
        <dbReference type="SAM" id="MobiDB-lite"/>
    </source>
</evidence>
<evidence type="ECO:0000305" key="4"/>
<accession>P0DOM5</accession>
<accession>P33818</accession>
<organism>
    <name type="scientific">Variola virus (isolate Human/India/Ind3/1967)</name>
    <name type="common">VARV</name>
    <name type="synonym">Smallpox virus</name>
    <dbReference type="NCBI Taxonomy" id="587200"/>
    <lineage>
        <taxon>Viruses</taxon>
        <taxon>Varidnaviria</taxon>
        <taxon>Bamfordvirae</taxon>
        <taxon>Nucleocytoviricota</taxon>
        <taxon>Pokkesviricetes</taxon>
        <taxon>Chitovirales</taxon>
        <taxon>Poxviridae</taxon>
        <taxon>Chordopoxvirinae</taxon>
        <taxon>Orthopoxvirus</taxon>
        <taxon>Variola virus</taxon>
    </lineage>
</organism>
<feature type="propeptide" id="PRO_0000040585" evidence="1">
    <location>
        <begin position="1"/>
        <end position="61"/>
    </location>
</feature>
<feature type="chain" id="PRO_0000040586" description="Major core protein OPG129">
    <location>
        <begin position="62"/>
        <end position="644"/>
    </location>
</feature>
<feature type="region of interest" description="Disordered" evidence="3">
    <location>
        <begin position="61"/>
        <end position="80"/>
    </location>
</feature>
<protein>
    <recommendedName>
        <fullName>Major core protein OPG129</fullName>
    </recommendedName>
    <alternativeName>
        <fullName>Virion core protein 4b</fullName>
        <shortName>p4b</shortName>
    </alternativeName>
</protein>
<organismHost>
    <name type="scientific">Homo sapiens</name>
    <name type="common">Human</name>
    <dbReference type="NCBI Taxonomy" id="9606"/>
</organismHost>
<name>PG129_VAR67</name>
<comment type="function">
    <text evidence="2">Major component of the virion core that undergoes proteolytic processing during the immature virion (IV) to mature virion (MV) transition. Essential for the formation of a structurally normal core.</text>
</comment>
<comment type="subcellular location">
    <subcellularLocation>
        <location evidence="2">Virion</location>
    </subcellularLocation>
    <text evidence="2">Localizes to the virion core wall, the mature protein accounts for 11% of the dry mass of the virion.</text>
</comment>
<comment type="PTM">
    <text evidence="2">The 73-kDa precursor is cleaved to a mature protein of 60 kDa during virion maturation. Proteolytic cleavage of major core proteins OPG129, OPG136, and OPG098, which occurs at a late stage of core formation, is required for production of infectious mature virions (MV).</text>
</comment>
<comment type="similarity">
    <text evidence="4">Belongs to the orthopoxvirus OPG129 family.</text>
</comment>
<dbReference type="EMBL" id="X69198">
    <property type="protein sequence ID" value="CAA49048.1"/>
    <property type="molecule type" value="Genomic_DNA"/>
</dbReference>
<dbReference type="PIR" id="D36848">
    <property type="entry name" value="D36848"/>
</dbReference>
<dbReference type="RefSeq" id="NP_042151.1">
    <property type="nucleotide sequence ID" value="NC_001611.1"/>
</dbReference>
<dbReference type="GeneID" id="1486519"/>
<dbReference type="KEGG" id="vg:1486519"/>
<dbReference type="Proteomes" id="UP000002060">
    <property type="component" value="Segment"/>
</dbReference>
<dbReference type="GO" id="GO:0044423">
    <property type="term" value="C:virion component"/>
    <property type="evidence" value="ECO:0007669"/>
    <property type="project" value="UniProtKB-KW"/>
</dbReference>
<dbReference type="InterPro" id="IPR004972">
    <property type="entry name" value="P4B"/>
</dbReference>
<dbReference type="Pfam" id="PF03292">
    <property type="entry name" value="Pox_P4B"/>
    <property type="match status" value="1"/>
</dbReference>
<sequence length="644" mass="72650">MEAVVNSDVFLTSNTGLKSSYTNQTLSLVDEDHIHTSDKSLSCSVCNSLSQIVDDDFISAGARNQRTKPKRAGNDQAQQTTKKDCMVSIDEVASTHDWSTRLRNDGNAIAKYLTTNKYDTSNFTIQDMLNIMNKLNIVRTNRNELFQLLTHVKSTLNNASVSVKCTHPLVLIHSRASPRIGDQLKELDKIYSPSNHHILLSTTRFQSMHFTDMSSSQDLSFIYRKPETNYYIHPILMALFGIKLPALENAYVHGDTYSLIQQLYEFRRVKSYNYMLLVNRLTEDNPIVITGVSDLISTEIQRANMHTMIRKAIMNIRMGIFYCNDDDAVDPHLMKIIHTGCSQVMTDEEQILASILSIVGFRPTLVSVARPINGISYDMKLQAAPYIVVNPMKMITTSDSPISINSKDIYSMAFDGNSGRVVFAPPNIGYGRCSGVTHIDSLGTNVMGSAVHSPVIVNGAMMFYVERRQNKNMFGGECYTGFRSLIDDTPIDVSPEIMLNGIMYRLKSAVCYKLGDQFFDCGSSDIFLKGHYTILFTENGPWMYDPLSVFNPGARNARLMRALKNQYKKLSMDSDDGFYEWLNGDGSVFAASKQQMLMNHVANFDDDLLTMEEAMSMISRHCCILIYAQDYDQYISARHITELF</sequence>
<keyword id="KW-1185">Reference proteome</keyword>
<keyword id="KW-0946">Virion</keyword>